<keyword id="KW-0010">Activator</keyword>
<keyword id="KW-0175">Coiled coil</keyword>
<keyword id="KW-0539">Nucleus</keyword>
<keyword id="KW-1185">Reference proteome</keyword>
<keyword id="KW-0804">Transcription</keyword>
<keyword id="KW-0805">Transcription regulation</keyword>
<sequence>MAQNDPGSGNLMDEFEEAFQSCLLSLTKQEPNSGTNKEEIELEVQKTTNRFIDVARQMEAFFLQKRFLVSTLKPYMLIKDENQDLSIEIQRKEALLQKHYNRLEEWKACLSDIQQGVHNRPTPPINPGMLQGPSGMQQPMGGGVPPRPGLMPGMPPGGMSPVGPMPPGQQHMLQAQQMQQLRMMGKLPPK</sequence>
<feature type="chain" id="PRO_0000305699" description="Mediator of RNA polymerase II transcription subunit 28">
    <location>
        <begin position="1"/>
        <end position="190"/>
    </location>
</feature>
<feature type="coiled-coil region" evidence="2">
    <location>
        <begin position="76"/>
        <end position="108"/>
    </location>
</feature>
<gene>
    <name type="primary">MED28</name>
    <name type="ORF">GA18674</name>
</gene>
<evidence type="ECO:0000250" key="1"/>
<evidence type="ECO:0000255" key="2"/>
<evidence type="ECO:0000305" key="3"/>
<organism>
    <name type="scientific">Drosophila pseudoobscura pseudoobscura</name>
    <name type="common">Fruit fly</name>
    <dbReference type="NCBI Taxonomy" id="46245"/>
    <lineage>
        <taxon>Eukaryota</taxon>
        <taxon>Metazoa</taxon>
        <taxon>Ecdysozoa</taxon>
        <taxon>Arthropoda</taxon>
        <taxon>Hexapoda</taxon>
        <taxon>Insecta</taxon>
        <taxon>Pterygota</taxon>
        <taxon>Neoptera</taxon>
        <taxon>Endopterygota</taxon>
        <taxon>Diptera</taxon>
        <taxon>Brachycera</taxon>
        <taxon>Muscomorpha</taxon>
        <taxon>Ephydroidea</taxon>
        <taxon>Drosophilidae</taxon>
        <taxon>Drosophila</taxon>
        <taxon>Sophophora</taxon>
    </lineage>
</organism>
<comment type="function">
    <text evidence="1">Component of the Mediator complex, a coactivator involved in the regulated transcription of nearly all RNA polymerase II-dependent genes. Mediator functions as a bridge to convey information from gene-specific regulatory proteins to the basal RNA polymerase II transcription machinery. Mediator is recruited to promoters by direct interactions with regulatory proteins and serves as a scaffold for the assembly of a functional preinitiation complex with RNA polymerase II and the general transcription factors (By similarity).</text>
</comment>
<comment type="subunit">
    <text evidence="1">Component of the Mediator complex.</text>
</comment>
<comment type="subcellular location">
    <subcellularLocation>
        <location evidence="3">Nucleus</location>
    </subcellularLocation>
</comment>
<comment type="similarity">
    <text evidence="3">Belongs to the Mediator complex subunit 28 family.</text>
</comment>
<name>MED28_DROPS</name>
<dbReference type="EMBL" id="CM000070">
    <property type="protein sequence ID" value="EAL28997.1"/>
    <property type="molecule type" value="Genomic_DNA"/>
</dbReference>
<dbReference type="RefSeq" id="XP_001359845.1">
    <property type="nucleotide sequence ID" value="XM_001359808.3"/>
</dbReference>
<dbReference type="SMR" id="Q294G7"/>
<dbReference type="FunCoup" id="Q294G7">
    <property type="interactions" value="2094"/>
</dbReference>
<dbReference type="STRING" id="46245.Q294G7"/>
<dbReference type="EnsemblMetazoa" id="FBtr0282700">
    <property type="protein sequence ID" value="FBpp0281138"/>
    <property type="gene ID" value="FBgn0078674"/>
</dbReference>
<dbReference type="GeneID" id="4803044"/>
<dbReference type="KEGG" id="dpo:4803044"/>
<dbReference type="CTD" id="80306"/>
<dbReference type="eggNOG" id="ENOG502QSN9">
    <property type="taxonomic scope" value="Eukaryota"/>
</dbReference>
<dbReference type="HOGENOM" id="CLU_088358_0_0_1"/>
<dbReference type="InParanoid" id="Q294G7"/>
<dbReference type="OMA" id="MQPSPQH"/>
<dbReference type="PhylomeDB" id="Q294G7"/>
<dbReference type="Proteomes" id="UP000001819">
    <property type="component" value="Chromosome 2"/>
</dbReference>
<dbReference type="Bgee" id="FBgn0078674">
    <property type="expression patterns" value="Expressed in female reproductive system and 2 other cell types or tissues"/>
</dbReference>
<dbReference type="GO" id="GO:0016592">
    <property type="term" value="C:mediator complex"/>
    <property type="evidence" value="ECO:0000250"/>
    <property type="project" value="UniProtKB"/>
</dbReference>
<dbReference type="GO" id="GO:0003712">
    <property type="term" value="F:transcription coregulator activity"/>
    <property type="evidence" value="ECO:0000250"/>
    <property type="project" value="UniProtKB"/>
</dbReference>
<dbReference type="GO" id="GO:0006357">
    <property type="term" value="P:regulation of transcription by RNA polymerase II"/>
    <property type="evidence" value="ECO:0000250"/>
    <property type="project" value="UniProtKB"/>
</dbReference>
<dbReference type="InterPro" id="IPR021640">
    <property type="entry name" value="Mediator_Med28"/>
</dbReference>
<dbReference type="PANTHER" id="PTHR13512">
    <property type="entry name" value="MEDIATOR COMPLEX SUBUNIT 28"/>
    <property type="match status" value="1"/>
</dbReference>
<dbReference type="PANTHER" id="PTHR13512:SF2">
    <property type="entry name" value="MEDIATOR OF RNA POLYMERASE II TRANSCRIPTION SUBUNIT 28"/>
    <property type="match status" value="1"/>
</dbReference>
<dbReference type="Pfam" id="PF11594">
    <property type="entry name" value="Med28"/>
    <property type="match status" value="1"/>
</dbReference>
<proteinExistence type="inferred from homology"/>
<reference key="1">
    <citation type="journal article" date="2005" name="Genome Res.">
        <title>Comparative genome sequencing of Drosophila pseudoobscura: chromosomal, gene, and cis-element evolution.</title>
        <authorList>
            <person name="Richards S."/>
            <person name="Liu Y."/>
            <person name="Bettencourt B.R."/>
            <person name="Hradecky P."/>
            <person name="Letovsky S."/>
            <person name="Nielsen R."/>
            <person name="Thornton K."/>
            <person name="Hubisz M.J."/>
            <person name="Chen R."/>
            <person name="Meisel R.P."/>
            <person name="Couronne O."/>
            <person name="Hua S."/>
            <person name="Smith M.A."/>
            <person name="Zhang P."/>
            <person name="Liu J."/>
            <person name="Bussemaker H.J."/>
            <person name="van Batenburg M.F."/>
            <person name="Howells S.L."/>
            <person name="Scherer S.E."/>
            <person name="Sodergren E."/>
            <person name="Matthews B.B."/>
            <person name="Crosby M.A."/>
            <person name="Schroeder A.J."/>
            <person name="Ortiz-Barrientos D."/>
            <person name="Rives C.M."/>
            <person name="Metzker M.L."/>
            <person name="Muzny D.M."/>
            <person name="Scott G."/>
            <person name="Steffen D."/>
            <person name="Wheeler D.A."/>
            <person name="Worley K.C."/>
            <person name="Havlak P."/>
            <person name="Durbin K.J."/>
            <person name="Egan A."/>
            <person name="Gill R."/>
            <person name="Hume J."/>
            <person name="Morgan M.B."/>
            <person name="Miner G."/>
            <person name="Hamilton C."/>
            <person name="Huang Y."/>
            <person name="Waldron L."/>
            <person name="Verduzco D."/>
            <person name="Clerc-Blankenburg K.P."/>
            <person name="Dubchak I."/>
            <person name="Noor M.A.F."/>
            <person name="Anderson W."/>
            <person name="White K.P."/>
            <person name="Clark A.G."/>
            <person name="Schaeffer S.W."/>
            <person name="Gelbart W.M."/>
            <person name="Weinstock G.M."/>
            <person name="Gibbs R.A."/>
        </authorList>
    </citation>
    <scope>NUCLEOTIDE SEQUENCE [LARGE SCALE GENOMIC DNA]</scope>
    <source>
        <strain>MV2-25 / Tucson 14011-0121.94</strain>
    </source>
</reference>
<accession>Q294G7</accession>
<protein>
    <recommendedName>
        <fullName>Mediator of RNA polymerase II transcription subunit 28</fullName>
    </recommendedName>
    <alternativeName>
        <fullName>Mediator complex subunit 28</fullName>
    </alternativeName>
</protein>